<accession>B7N862</accession>
<name>SYP_ECOLU</name>
<dbReference type="EC" id="6.1.1.15" evidence="1"/>
<dbReference type="EMBL" id="CU928163">
    <property type="protein sequence ID" value="CAR11412.1"/>
    <property type="molecule type" value="Genomic_DNA"/>
</dbReference>
<dbReference type="RefSeq" id="WP_001260707.1">
    <property type="nucleotide sequence ID" value="NC_011751.1"/>
</dbReference>
<dbReference type="RefSeq" id="YP_002410968.1">
    <property type="nucleotide sequence ID" value="NC_011751.1"/>
</dbReference>
<dbReference type="SMR" id="B7N862"/>
<dbReference type="STRING" id="585056.ECUMN_0192"/>
<dbReference type="KEGG" id="eum:ECUMN_0192"/>
<dbReference type="PATRIC" id="fig|585056.7.peg.386"/>
<dbReference type="HOGENOM" id="CLU_016739_0_0_6"/>
<dbReference type="Proteomes" id="UP000007097">
    <property type="component" value="Chromosome"/>
</dbReference>
<dbReference type="GO" id="GO:0005829">
    <property type="term" value="C:cytosol"/>
    <property type="evidence" value="ECO:0007669"/>
    <property type="project" value="TreeGrafter"/>
</dbReference>
<dbReference type="GO" id="GO:0002161">
    <property type="term" value="F:aminoacyl-tRNA deacylase activity"/>
    <property type="evidence" value="ECO:0007669"/>
    <property type="project" value="InterPro"/>
</dbReference>
<dbReference type="GO" id="GO:0005524">
    <property type="term" value="F:ATP binding"/>
    <property type="evidence" value="ECO:0007669"/>
    <property type="project" value="UniProtKB-UniRule"/>
</dbReference>
<dbReference type="GO" id="GO:0004827">
    <property type="term" value="F:proline-tRNA ligase activity"/>
    <property type="evidence" value="ECO:0007669"/>
    <property type="project" value="UniProtKB-UniRule"/>
</dbReference>
<dbReference type="GO" id="GO:0006433">
    <property type="term" value="P:prolyl-tRNA aminoacylation"/>
    <property type="evidence" value="ECO:0007669"/>
    <property type="project" value="UniProtKB-UniRule"/>
</dbReference>
<dbReference type="CDD" id="cd04334">
    <property type="entry name" value="ProRS-INS"/>
    <property type="match status" value="1"/>
</dbReference>
<dbReference type="CDD" id="cd00861">
    <property type="entry name" value="ProRS_anticodon_short"/>
    <property type="match status" value="1"/>
</dbReference>
<dbReference type="CDD" id="cd00779">
    <property type="entry name" value="ProRS_core_prok"/>
    <property type="match status" value="1"/>
</dbReference>
<dbReference type="FunFam" id="3.30.930.10:FF:000012">
    <property type="entry name" value="Proline--tRNA ligase"/>
    <property type="match status" value="1"/>
</dbReference>
<dbReference type="FunFam" id="3.30.930.10:FF:000097">
    <property type="entry name" value="Proline--tRNA ligase"/>
    <property type="match status" value="1"/>
</dbReference>
<dbReference type="FunFam" id="3.40.50.800:FF:000006">
    <property type="entry name" value="Proline--tRNA ligase"/>
    <property type="match status" value="1"/>
</dbReference>
<dbReference type="FunFam" id="3.90.960.10:FF:000001">
    <property type="entry name" value="Proline--tRNA ligase"/>
    <property type="match status" value="1"/>
</dbReference>
<dbReference type="Gene3D" id="3.40.50.800">
    <property type="entry name" value="Anticodon-binding domain"/>
    <property type="match status" value="1"/>
</dbReference>
<dbReference type="Gene3D" id="3.30.930.10">
    <property type="entry name" value="Bira Bifunctional Protein, Domain 2"/>
    <property type="match status" value="2"/>
</dbReference>
<dbReference type="Gene3D" id="3.90.960.10">
    <property type="entry name" value="YbaK/aminoacyl-tRNA synthetase-associated domain"/>
    <property type="match status" value="1"/>
</dbReference>
<dbReference type="HAMAP" id="MF_01569">
    <property type="entry name" value="Pro_tRNA_synth_type1"/>
    <property type="match status" value="1"/>
</dbReference>
<dbReference type="InterPro" id="IPR002314">
    <property type="entry name" value="aa-tRNA-synt_IIb"/>
</dbReference>
<dbReference type="InterPro" id="IPR006195">
    <property type="entry name" value="aa-tRNA-synth_II"/>
</dbReference>
<dbReference type="InterPro" id="IPR045864">
    <property type="entry name" value="aa-tRNA-synth_II/BPL/LPL"/>
</dbReference>
<dbReference type="InterPro" id="IPR004154">
    <property type="entry name" value="Anticodon-bd"/>
</dbReference>
<dbReference type="InterPro" id="IPR036621">
    <property type="entry name" value="Anticodon-bd_dom_sf"/>
</dbReference>
<dbReference type="InterPro" id="IPR002316">
    <property type="entry name" value="Pro-tRNA-ligase_IIa"/>
</dbReference>
<dbReference type="InterPro" id="IPR004500">
    <property type="entry name" value="Pro-tRNA-synth_IIa_bac-type"/>
</dbReference>
<dbReference type="InterPro" id="IPR023717">
    <property type="entry name" value="Pro-tRNA-Synthase_IIa_type1"/>
</dbReference>
<dbReference type="InterPro" id="IPR050062">
    <property type="entry name" value="Pro-tRNA_synthetase"/>
</dbReference>
<dbReference type="InterPro" id="IPR044140">
    <property type="entry name" value="ProRS_anticodon_short"/>
</dbReference>
<dbReference type="InterPro" id="IPR033730">
    <property type="entry name" value="ProRS_core_prok"/>
</dbReference>
<dbReference type="InterPro" id="IPR036754">
    <property type="entry name" value="YbaK/aa-tRNA-synt-asso_dom_sf"/>
</dbReference>
<dbReference type="InterPro" id="IPR007214">
    <property type="entry name" value="YbaK/aa-tRNA-synth-assoc-dom"/>
</dbReference>
<dbReference type="NCBIfam" id="NF006625">
    <property type="entry name" value="PRK09194.1"/>
    <property type="match status" value="1"/>
</dbReference>
<dbReference type="NCBIfam" id="TIGR00409">
    <property type="entry name" value="proS_fam_II"/>
    <property type="match status" value="1"/>
</dbReference>
<dbReference type="PANTHER" id="PTHR42753">
    <property type="entry name" value="MITOCHONDRIAL RIBOSOME PROTEIN L39/PROLYL-TRNA LIGASE FAMILY MEMBER"/>
    <property type="match status" value="1"/>
</dbReference>
<dbReference type="PANTHER" id="PTHR42753:SF2">
    <property type="entry name" value="PROLINE--TRNA LIGASE"/>
    <property type="match status" value="1"/>
</dbReference>
<dbReference type="Pfam" id="PF03129">
    <property type="entry name" value="HGTP_anticodon"/>
    <property type="match status" value="1"/>
</dbReference>
<dbReference type="Pfam" id="PF00587">
    <property type="entry name" value="tRNA-synt_2b"/>
    <property type="match status" value="1"/>
</dbReference>
<dbReference type="Pfam" id="PF04073">
    <property type="entry name" value="tRNA_edit"/>
    <property type="match status" value="1"/>
</dbReference>
<dbReference type="PIRSF" id="PIRSF001535">
    <property type="entry name" value="ProRS_1"/>
    <property type="match status" value="1"/>
</dbReference>
<dbReference type="PRINTS" id="PR01046">
    <property type="entry name" value="TRNASYNTHPRO"/>
</dbReference>
<dbReference type="SUPFAM" id="SSF52954">
    <property type="entry name" value="Class II aaRS ABD-related"/>
    <property type="match status" value="1"/>
</dbReference>
<dbReference type="SUPFAM" id="SSF55681">
    <property type="entry name" value="Class II aaRS and biotin synthetases"/>
    <property type="match status" value="1"/>
</dbReference>
<dbReference type="SUPFAM" id="SSF55826">
    <property type="entry name" value="YbaK/ProRS associated domain"/>
    <property type="match status" value="1"/>
</dbReference>
<dbReference type="PROSITE" id="PS50862">
    <property type="entry name" value="AA_TRNA_LIGASE_II"/>
    <property type="match status" value="1"/>
</dbReference>
<gene>
    <name evidence="1" type="primary">proS</name>
    <name type="ordered locus">ECUMN_0192</name>
</gene>
<proteinExistence type="inferred from homology"/>
<evidence type="ECO:0000255" key="1">
    <source>
        <dbReference type="HAMAP-Rule" id="MF_01569"/>
    </source>
</evidence>
<organism>
    <name type="scientific">Escherichia coli O17:K52:H18 (strain UMN026 / ExPEC)</name>
    <dbReference type="NCBI Taxonomy" id="585056"/>
    <lineage>
        <taxon>Bacteria</taxon>
        <taxon>Pseudomonadati</taxon>
        <taxon>Pseudomonadota</taxon>
        <taxon>Gammaproteobacteria</taxon>
        <taxon>Enterobacterales</taxon>
        <taxon>Enterobacteriaceae</taxon>
        <taxon>Escherichia</taxon>
    </lineage>
</organism>
<protein>
    <recommendedName>
        <fullName evidence="1">Proline--tRNA ligase</fullName>
        <ecNumber evidence="1">6.1.1.15</ecNumber>
    </recommendedName>
    <alternativeName>
        <fullName evidence="1">Prolyl-tRNA synthetase</fullName>
        <shortName evidence="1">ProRS</shortName>
    </alternativeName>
</protein>
<feature type="chain" id="PRO_1000199381" description="Proline--tRNA ligase">
    <location>
        <begin position="1"/>
        <end position="572"/>
    </location>
</feature>
<keyword id="KW-0030">Aminoacyl-tRNA synthetase</keyword>
<keyword id="KW-0067">ATP-binding</keyword>
<keyword id="KW-0963">Cytoplasm</keyword>
<keyword id="KW-0436">Ligase</keyword>
<keyword id="KW-0547">Nucleotide-binding</keyword>
<keyword id="KW-0648">Protein biosynthesis</keyword>
<sequence length="572" mass="63623">MRTSQYLLSTLKETPADAEVISHQLMLRAGMIRKLASGLYTWLPTGVRVLKKVENIVREEMNNAGAIEVSMPVVQPADLWQESGRWEQYGPELLRFVDRGERPFVLGPTHEEVITDLIRNELSSYKQLPLNFYQIQTKFRDEVRPRFGVMRSREFLMKDAYSFHTSQESLQETYDAMYAAYSKIFSRMGLDFRAVQADTGSIGGSASHEFQVLAQSGEDDVVFSDTSDYAANIELAEAIAPKEPRAAATQEMTLVDTPNAKTIAELVEQFNLPIEKTVKTLLVKAVEGSSFPLVALLVRGDHELNEVKAEKLPQVASPLTFATEEEIRAVVKAGPGSLGPVNMPIPVVIDRTVAAMSDFAAGANIDGKHYFGINWDRDVATPEIADIRNVVAGDPSPDGQGTLLIKRGIEVGHIFQLGTKYSEALKASVQGEDGRNQILTMGCYGIGVTRVVAAAIEQNYDERGIVWPDAIAPFQVAILPMNMHKSFRVQELAEKLYSELRAQGIEVLLDDRKERPGVMFADMELIGIPHTIVLGDRNLDNDDIEYKYRRNGEKQLIKTGDIVDYLVKQIKG</sequence>
<reference key="1">
    <citation type="journal article" date="2009" name="PLoS Genet.">
        <title>Organised genome dynamics in the Escherichia coli species results in highly diverse adaptive paths.</title>
        <authorList>
            <person name="Touchon M."/>
            <person name="Hoede C."/>
            <person name="Tenaillon O."/>
            <person name="Barbe V."/>
            <person name="Baeriswyl S."/>
            <person name="Bidet P."/>
            <person name="Bingen E."/>
            <person name="Bonacorsi S."/>
            <person name="Bouchier C."/>
            <person name="Bouvet O."/>
            <person name="Calteau A."/>
            <person name="Chiapello H."/>
            <person name="Clermont O."/>
            <person name="Cruveiller S."/>
            <person name="Danchin A."/>
            <person name="Diard M."/>
            <person name="Dossat C."/>
            <person name="Karoui M.E."/>
            <person name="Frapy E."/>
            <person name="Garry L."/>
            <person name="Ghigo J.M."/>
            <person name="Gilles A.M."/>
            <person name="Johnson J."/>
            <person name="Le Bouguenec C."/>
            <person name="Lescat M."/>
            <person name="Mangenot S."/>
            <person name="Martinez-Jehanne V."/>
            <person name="Matic I."/>
            <person name="Nassif X."/>
            <person name="Oztas S."/>
            <person name="Petit M.A."/>
            <person name="Pichon C."/>
            <person name="Rouy Z."/>
            <person name="Ruf C.S."/>
            <person name="Schneider D."/>
            <person name="Tourret J."/>
            <person name="Vacherie B."/>
            <person name="Vallenet D."/>
            <person name="Medigue C."/>
            <person name="Rocha E.P.C."/>
            <person name="Denamur E."/>
        </authorList>
    </citation>
    <scope>NUCLEOTIDE SEQUENCE [LARGE SCALE GENOMIC DNA]</scope>
    <source>
        <strain>UMN026 / ExPEC</strain>
    </source>
</reference>
<comment type="function">
    <text evidence="1">Catalyzes the attachment of proline to tRNA(Pro) in a two-step reaction: proline is first activated by ATP to form Pro-AMP and then transferred to the acceptor end of tRNA(Pro). As ProRS can inadvertently accommodate and process non-cognate amino acids such as alanine and cysteine, to avoid such errors it has two additional distinct editing activities against alanine. One activity is designated as 'pretransfer' editing and involves the tRNA(Pro)-independent hydrolysis of activated Ala-AMP. The other activity is designated 'posttransfer' editing and involves deacylation of mischarged Ala-tRNA(Pro). The misacylated Cys-tRNA(Pro) is not edited by ProRS.</text>
</comment>
<comment type="catalytic activity">
    <reaction evidence="1">
        <text>tRNA(Pro) + L-proline + ATP = L-prolyl-tRNA(Pro) + AMP + diphosphate</text>
        <dbReference type="Rhea" id="RHEA:14305"/>
        <dbReference type="Rhea" id="RHEA-COMP:9700"/>
        <dbReference type="Rhea" id="RHEA-COMP:9702"/>
        <dbReference type="ChEBI" id="CHEBI:30616"/>
        <dbReference type="ChEBI" id="CHEBI:33019"/>
        <dbReference type="ChEBI" id="CHEBI:60039"/>
        <dbReference type="ChEBI" id="CHEBI:78442"/>
        <dbReference type="ChEBI" id="CHEBI:78532"/>
        <dbReference type="ChEBI" id="CHEBI:456215"/>
        <dbReference type="EC" id="6.1.1.15"/>
    </reaction>
</comment>
<comment type="subunit">
    <text evidence="1">Homodimer.</text>
</comment>
<comment type="subcellular location">
    <subcellularLocation>
        <location evidence="1">Cytoplasm</location>
    </subcellularLocation>
</comment>
<comment type="domain">
    <text evidence="1">Consists of three domains: the N-terminal catalytic domain, the editing domain and the C-terminal anticodon-binding domain.</text>
</comment>
<comment type="similarity">
    <text evidence="1">Belongs to the class-II aminoacyl-tRNA synthetase family. ProS type 1 subfamily.</text>
</comment>